<accession>C5DCI0</accession>
<feature type="chain" id="PRO_0000384233" description="Maintenance of mitochondrial morphology protein 1">
    <location>
        <begin position="1"/>
        <end position="447"/>
    </location>
</feature>
<feature type="topological domain" description="Lumenal" evidence="1">
    <location>
        <begin position="1"/>
        <end position="109"/>
    </location>
</feature>
<feature type="transmembrane region" description="Helical" evidence="1">
    <location>
        <begin position="110"/>
        <end position="130"/>
    </location>
</feature>
<feature type="topological domain" description="Cytoplasmic" evidence="1">
    <location>
        <begin position="131"/>
        <end position="447"/>
    </location>
</feature>
<feature type="domain" description="SMP-LTD" evidence="1">
    <location>
        <begin position="208"/>
        <end position="421"/>
    </location>
</feature>
<evidence type="ECO:0000255" key="1">
    <source>
        <dbReference type="HAMAP-Rule" id="MF_03103"/>
    </source>
</evidence>
<sequence length="447" mass="50168">MKSPNETSFTNHTLENASTFGADLSIESNESLVSLDEYLSNTLPLHLQQLFLENLQKRQQGILESASDSIIEAVRDSSQQKFQNGLHLSLDSGVGSKGSVFSAWSFAQGLVIGQLSVIVVLIFFIKFFIFSEGPIKTEGPKGGKSGPKRDSAYVSPLLSTSTSHFLSSIIKRGESDGADSSENTDTDRKFSQINTILEKTYYNVETHSPETLDWFNVLIGQTIQQFREEALQKDNIVHSLNNFIARKSGELPQYLDTIKITELDIGEDFPILSNCRIQYSPNSNKQRLEAKIDIDLSDRLALGIETKLLVNYPKPFTAALPIQLTVSIVRFQACLTVSLTTAEEFVPTSENEASYGSENGGYFLMFSFSPEYRMEFDVKSLIGARSKLQDIPKIGSLIESQIKKWFVERCVEPRFQFIKLPSLWPRSKNTREEKTENDDISMKSTDL</sequence>
<protein>
    <recommendedName>
        <fullName evidence="1">Maintenance of mitochondrial morphology protein 1</fullName>
    </recommendedName>
</protein>
<proteinExistence type="inferred from homology"/>
<comment type="function">
    <text evidence="1">Component of the ERMES/MDM complex, which serves as a molecular tether to connect the endoplasmic reticulum (ER) and mitochondria. Components of this complex are involved in the control of mitochondrial shape and protein biogenesis, and function in nonvesicular lipid trafficking between the ER and mitochondria. The MDM12-MMM1 subcomplex functions in the major beta-barrel assembly pathway that is responsible for biogenesis of all outer membrane beta-barrel proteins, and acts in a late step after the SAM complex. The MDM10-MDM12-MMM1 subcomplex further acts in the TOM40-specific pathway after the action of the MDM12-MMM1 complex. Essential for establishing and maintaining the structure of mitochondria and maintenance of mtDNA nucleoids.</text>
</comment>
<comment type="subunit">
    <text evidence="1">Homodimer. Component of the ER-mitochondria encounter structure (ERMES) or MDM complex, composed of MMM1, MDM10, MDM12 and MDM34. A MMM1 homodimer associates with one molecule of MDM12 on each side in a pairwise head-to-tail manner, and the SMP-LTD domains of MMM1 and MDM12 generate a continuous hydrophobic tunnel for phospholipid trafficking.</text>
</comment>
<comment type="subcellular location">
    <subcellularLocation>
        <location evidence="1">Endoplasmic reticulum membrane</location>
        <topology evidence="1">Single-pass type I membrane protein</topology>
    </subcellularLocation>
    <text evidence="1">The ERMES/MDM complex localizes to a few discrete foci (around 10 per single cell), that represent mitochondria-endoplasmic reticulum junctions. These foci are often found next to mtDNA nucleoids.</text>
</comment>
<comment type="domain">
    <text evidence="1">The SMP-LTD domain is a barrel-like domain that can bind various types of glycerophospholipids in its interior and mediate their transfer between two adjacent bilayers.</text>
</comment>
<comment type="similarity">
    <text evidence="1">Belongs to the MMM1 family.</text>
</comment>
<name>MMM1_LACTC</name>
<keyword id="KW-0256">Endoplasmic reticulum</keyword>
<keyword id="KW-0445">Lipid transport</keyword>
<keyword id="KW-0446">Lipid-binding</keyword>
<keyword id="KW-0472">Membrane</keyword>
<keyword id="KW-1185">Reference proteome</keyword>
<keyword id="KW-0812">Transmembrane</keyword>
<keyword id="KW-1133">Transmembrane helix</keyword>
<keyword id="KW-0813">Transport</keyword>
<organism>
    <name type="scientific">Lachancea thermotolerans (strain ATCC 56472 / CBS 6340 / NRRL Y-8284)</name>
    <name type="common">Yeast</name>
    <name type="synonym">Kluyveromyces thermotolerans</name>
    <dbReference type="NCBI Taxonomy" id="559295"/>
    <lineage>
        <taxon>Eukaryota</taxon>
        <taxon>Fungi</taxon>
        <taxon>Dikarya</taxon>
        <taxon>Ascomycota</taxon>
        <taxon>Saccharomycotina</taxon>
        <taxon>Saccharomycetes</taxon>
        <taxon>Saccharomycetales</taxon>
        <taxon>Saccharomycetaceae</taxon>
        <taxon>Lachancea</taxon>
    </lineage>
</organism>
<dbReference type="EMBL" id="CU928166">
    <property type="protein sequence ID" value="CAR21491.1"/>
    <property type="molecule type" value="Genomic_DNA"/>
</dbReference>
<dbReference type="RefSeq" id="XP_002551929.1">
    <property type="nucleotide sequence ID" value="XM_002551883.1"/>
</dbReference>
<dbReference type="SMR" id="C5DCI0"/>
<dbReference type="FunCoup" id="C5DCI0">
    <property type="interactions" value="96"/>
</dbReference>
<dbReference type="STRING" id="559295.C5DCI0"/>
<dbReference type="GeneID" id="8290762"/>
<dbReference type="KEGG" id="lth:KLTH0B03234g"/>
<dbReference type="eggNOG" id="ENOG502QUUW">
    <property type="taxonomic scope" value="Eukaryota"/>
</dbReference>
<dbReference type="HOGENOM" id="CLU_032730_2_0_1"/>
<dbReference type="InParanoid" id="C5DCI0"/>
<dbReference type="OMA" id="WSFTQGL"/>
<dbReference type="OrthoDB" id="5599157at2759"/>
<dbReference type="Proteomes" id="UP000002036">
    <property type="component" value="Chromosome B"/>
</dbReference>
<dbReference type="GO" id="GO:0005789">
    <property type="term" value="C:endoplasmic reticulum membrane"/>
    <property type="evidence" value="ECO:0007669"/>
    <property type="project" value="UniProtKB-SubCell"/>
</dbReference>
<dbReference type="GO" id="GO:0032865">
    <property type="term" value="C:ERMES complex"/>
    <property type="evidence" value="ECO:0007669"/>
    <property type="project" value="UniProtKB-UniRule"/>
</dbReference>
<dbReference type="GO" id="GO:0008289">
    <property type="term" value="F:lipid binding"/>
    <property type="evidence" value="ECO:0007669"/>
    <property type="project" value="UniProtKB-KW"/>
</dbReference>
<dbReference type="GO" id="GO:0006869">
    <property type="term" value="P:lipid transport"/>
    <property type="evidence" value="ECO:0007669"/>
    <property type="project" value="UniProtKB-KW"/>
</dbReference>
<dbReference type="GO" id="GO:0000002">
    <property type="term" value="P:mitochondrial genome maintenance"/>
    <property type="evidence" value="ECO:0007669"/>
    <property type="project" value="UniProtKB-UniRule"/>
</dbReference>
<dbReference type="GO" id="GO:0045040">
    <property type="term" value="P:protein insertion into mitochondrial outer membrane"/>
    <property type="evidence" value="ECO:0007669"/>
    <property type="project" value="UniProtKB-UniRule"/>
</dbReference>
<dbReference type="CDD" id="cd21671">
    <property type="entry name" value="SMP_Mmm1"/>
    <property type="match status" value="1"/>
</dbReference>
<dbReference type="HAMAP" id="MF_03103">
    <property type="entry name" value="Mmm1"/>
    <property type="match status" value="1"/>
</dbReference>
<dbReference type="InterPro" id="IPR027537">
    <property type="entry name" value="Mmm1"/>
</dbReference>
<dbReference type="InterPro" id="IPR019411">
    <property type="entry name" value="MMM1_dom"/>
</dbReference>
<dbReference type="InterPro" id="IPR031468">
    <property type="entry name" value="SMP_LBD"/>
</dbReference>
<dbReference type="PANTHER" id="PTHR13466">
    <property type="entry name" value="TEX2 PROTEIN-RELATED"/>
    <property type="match status" value="1"/>
</dbReference>
<dbReference type="Pfam" id="PF10296">
    <property type="entry name" value="MMM1"/>
    <property type="match status" value="1"/>
</dbReference>
<dbReference type="PROSITE" id="PS51847">
    <property type="entry name" value="SMP"/>
    <property type="match status" value="1"/>
</dbReference>
<gene>
    <name evidence="1" type="primary">MMM1</name>
    <name type="ordered locus">KLTH0B03234g</name>
</gene>
<reference key="1">
    <citation type="journal article" date="2009" name="Genome Res.">
        <title>Comparative genomics of protoploid Saccharomycetaceae.</title>
        <authorList>
            <consortium name="The Genolevures Consortium"/>
            <person name="Souciet J.-L."/>
            <person name="Dujon B."/>
            <person name="Gaillardin C."/>
            <person name="Johnston M."/>
            <person name="Baret P.V."/>
            <person name="Cliften P."/>
            <person name="Sherman D.J."/>
            <person name="Weissenbach J."/>
            <person name="Westhof E."/>
            <person name="Wincker P."/>
            <person name="Jubin C."/>
            <person name="Poulain J."/>
            <person name="Barbe V."/>
            <person name="Segurens B."/>
            <person name="Artiguenave F."/>
            <person name="Anthouard V."/>
            <person name="Vacherie B."/>
            <person name="Val M.-E."/>
            <person name="Fulton R.S."/>
            <person name="Minx P."/>
            <person name="Wilson R."/>
            <person name="Durrens P."/>
            <person name="Jean G."/>
            <person name="Marck C."/>
            <person name="Martin T."/>
            <person name="Nikolski M."/>
            <person name="Rolland T."/>
            <person name="Seret M.-L."/>
            <person name="Casaregola S."/>
            <person name="Despons L."/>
            <person name="Fairhead C."/>
            <person name="Fischer G."/>
            <person name="Lafontaine I."/>
            <person name="Leh V."/>
            <person name="Lemaire M."/>
            <person name="de Montigny J."/>
            <person name="Neuveglise C."/>
            <person name="Thierry A."/>
            <person name="Blanc-Lenfle I."/>
            <person name="Bleykasten C."/>
            <person name="Diffels J."/>
            <person name="Fritsch E."/>
            <person name="Frangeul L."/>
            <person name="Goeffon A."/>
            <person name="Jauniaux N."/>
            <person name="Kachouri-Lafond R."/>
            <person name="Payen C."/>
            <person name="Potier S."/>
            <person name="Pribylova L."/>
            <person name="Ozanne C."/>
            <person name="Richard G.-F."/>
            <person name="Sacerdot C."/>
            <person name="Straub M.-L."/>
            <person name="Talla E."/>
        </authorList>
    </citation>
    <scope>NUCLEOTIDE SEQUENCE [LARGE SCALE GENOMIC DNA]</scope>
    <source>
        <strain>ATCC 56472 / CBS 6340 / NRRL Y-8284</strain>
    </source>
</reference>